<protein>
    <recommendedName>
        <fullName evidence="12">Cystathionine beta-lyase MetC</fullName>
        <shortName evidence="12">CBL</shortName>
        <shortName evidence="11">CL</shortName>
        <ecNumber evidence="5">4.4.1.13</ecNumber>
    </recommendedName>
    <alternativeName>
        <fullName evidence="10">Beta-cystathionase MetC</fullName>
    </alternativeName>
    <alternativeName>
        <fullName evidence="9">Cysteine desulfhydrase MetC</fullName>
        <shortName evidence="9">CD</shortName>
        <ecNumber evidence="1">4.4.1.28</ecNumber>
    </alternativeName>
    <alternativeName>
        <fullName>Cysteine lyase MetC</fullName>
    </alternativeName>
    <alternativeName>
        <fullName>Cysteine-S-conjugate beta-lyase MetC</fullName>
    </alternativeName>
</protein>
<gene>
    <name evidence="10" type="primary">metC</name>
    <name type="ordered locus">b3008</name>
    <name type="ordered locus">JW2975</name>
</gene>
<proteinExistence type="evidence at protein level"/>
<organism>
    <name type="scientific">Escherichia coli (strain K12)</name>
    <dbReference type="NCBI Taxonomy" id="83333"/>
    <lineage>
        <taxon>Bacteria</taxon>
        <taxon>Pseudomonadati</taxon>
        <taxon>Pseudomonadota</taxon>
        <taxon>Gammaproteobacteria</taxon>
        <taxon>Enterobacterales</taxon>
        <taxon>Enterobacteriaceae</taxon>
        <taxon>Escherichia</taxon>
    </lineage>
</organism>
<keyword id="KW-0002">3D-structure</keyword>
<keyword id="KW-0028">Amino-acid biosynthesis</keyword>
<keyword id="KW-0963">Cytoplasm</keyword>
<keyword id="KW-0903">Direct protein sequencing</keyword>
<keyword id="KW-0456">Lyase</keyword>
<keyword id="KW-0486">Methionine biosynthesis</keyword>
<keyword id="KW-0663">Pyridoxal phosphate</keyword>
<keyword id="KW-1185">Reference proteome</keyword>
<feature type="initiator methionine" description="Removed">
    <location>
        <position position="1"/>
    </location>
</feature>
<feature type="chain" id="PRO_0000114768" description="Cystathionine beta-lyase MetC">
    <location>
        <begin position="2"/>
        <end position="395"/>
    </location>
</feature>
<feature type="modified residue" description="N6-(pyridoxal phosphate)lysine" evidence="4 7">
    <location>
        <position position="210"/>
    </location>
</feature>
<feature type="helix" evidence="21">
    <location>
        <begin position="6"/>
        <end position="12"/>
    </location>
</feature>
<feature type="helix" evidence="21">
    <location>
        <begin position="17"/>
        <end position="20"/>
    </location>
</feature>
<feature type="strand" evidence="21">
    <location>
        <begin position="23"/>
        <end position="25"/>
    </location>
</feature>
<feature type="strand" evidence="21">
    <location>
        <begin position="32"/>
        <end position="34"/>
    </location>
</feature>
<feature type="helix" evidence="21">
    <location>
        <begin position="39"/>
        <end position="47"/>
    </location>
</feature>
<feature type="turn" evidence="21">
    <location>
        <begin position="48"/>
        <end position="52"/>
    </location>
</feature>
<feature type="helix" evidence="21">
    <location>
        <begin position="57"/>
        <end position="59"/>
    </location>
</feature>
<feature type="helix" evidence="21">
    <location>
        <begin position="62"/>
        <end position="75"/>
    </location>
</feature>
<feature type="strand" evidence="21">
    <location>
        <begin position="78"/>
        <end position="85"/>
    </location>
</feature>
<feature type="helix" evidence="21">
    <location>
        <begin position="86"/>
        <end position="97"/>
    </location>
</feature>
<feature type="strand" evidence="21">
    <location>
        <begin position="103"/>
        <end position="107"/>
    </location>
</feature>
<feature type="helix" evidence="21">
    <location>
        <begin position="112"/>
        <end position="120"/>
    </location>
</feature>
<feature type="helix" evidence="21">
    <location>
        <begin position="122"/>
        <end position="125"/>
    </location>
</feature>
<feature type="strand" evidence="21">
    <location>
        <begin position="128"/>
        <end position="132"/>
    </location>
</feature>
<feature type="helix" evidence="21">
    <location>
        <begin position="137"/>
        <end position="143"/>
    </location>
</feature>
<feature type="strand" evidence="21">
    <location>
        <begin position="148"/>
        <end position="156"/>
    </location>
</feature>
<feature type="turn" evidence="21">
    <location>
        <begin position="158"/>
        <end position="160"/>
    </location>
</feature>
<feature type="helix" evidence="21">
    <location>
        <begin position="166"/>
        <end position="176"/>
    </location>
</feature>
<feature type="strand" evidence="21">
    <location>
        <begin position="181"/>
        <end position="185"/>
    </location>
</feature>
<feature type="turn" evidence="21">
    <location>
        <begin position="187"/>
        <end position="192"/>
    </location>
</feature>
<feature type="helix" evidence="21">
    <location>
        <begin position="196"/>
        <end position="199"/>
    </location>
</feature>
<feature type="strand" evidence="21">
    <location>
        <begin position="202"/>
        <end position="207"/>
    </location>
</feature>
<feature type="turn" evidence="21">
    <location>
        <begin position="208"/>
        <end position="213"/>
    </location>
</feature>
<feature type="strand" evidence="20">
    <location>
        <begin position="215"/>
        <end position="217"/>
    </location>
</feature>
<feature type="strand" evidence="21">
    <location>
        <begin position="221"/>
        <end position="225"/>
    </location>
</feature>
<feature type="turn" evidence="21">
    <location>
        <begin position="227"/>
        <end position="229"/>
    </location>
</feature>
<feature type="helix" evidence="21">
    <location>
        <begin position="230"/>
        <end position="239"/>
    </location>
</feature>
<feature type="helix" evidence="21">
    <location>
        <begin position="246"/>
        <end position="256"/>
    </location>
</feature>
<feature type="helix" evidence="21">
    <location>
        <begin position="259"/>
        <end position="278"/>
    </location>
</feature>
<feature type="strand" evidence="21">
    <location>
        <begin position="283"/>
        <end position="287"/>
    </location>
</feature>
<feature type="helix" evidence="21">
    <location>
        <begin position="297"/>
        <end position="303"/>
    </location>
</feature>
<feature type="strand" evidence="21">
    <location>
        <begin position="309"/>
        <end position="317"/>
    </location>
</feature>
<feature type="helix" evidence="21">
    <location>
        <begin position="321"/>
        <end position="328"/>
    </location>
</feature>
<feature type="strand" evidence="21">
    <location>
        <begin position="342"/>
        <end position="344"/>
    </location>
</feature>
<feature type="strand" evidence="21">
    <location>
        <begin position="346"/>
        <end position="350"/>
    </location>
</feature>
<feature type="helix" evidence="21">
    <location>
        <begin position="352"/>
        <end position="356"/>
    </location>
</feature>
<feature type="strand" evidence="21">
    <location>
        <begin position="370"/>
        <end position="374"/>
    </location>
</feature>
<feature type="helix" evidence="21">
    <location>
        <begin position="380"/>
        <end position="392"/>
    </location>
</feature>
<evidence type="ECO:0000269" key="1">
    <source>
    </source>
</evidence>
<evidence type="ECO:0000269" key="2">
    <source>
    </source>
</evidence>
<evidence type="ECO:0000269" key="3">
    <source>
    </source>
</evidence>
<evidence type="ECO:0000269" key="4">
    <source>
    </source>
</evidence>
<evidence type="ECO:0000269" key="5">
    <source>
    </source>
</evidence>
<evidence type="ECO:0000269" key="6">
    <source>
    </source>
</evidence>
<evidence type="ECO:0000269" key="7">
    <source>
    </source>
</evidence>
<evidence type="ECO:0000269" key="8">
    <source>
    </source>
</evidence>
<evidence type="ECO:0000303" key="9">
    <source>
    </source>
</evidence>
<evidence type="ECO:0000303" key="10">
    <source>
    </source>
</evidence>
<evidence type="ECO:0000303" key="11">
    <source>
    </source>
</evidence>
<evidence type="ECO:0000303" key="12">
    <source>
    </source>
</evidence>
<evidence type="ECO:0000305" key="13"/>
<evidence type="ECO:0007744" key="14">
    <source>
        <dbReference type="PDB" id="1CL1"/>
    </source>
</evidence>
<evidence type="ECO:0007744" key="15">
    <source>
        <dbReference type="PDB" id="1CL2"/>
    </source>
</evidence>
<evidence type="ECO:0007744" key="16">
    <source>
        <dbReference type="PDB" id="2FQ6"/>
    </source>
</evidence>
<evidence type="ECO:0007744" key="17">
    <source>
        <dbReference type="PDB" id="2GQN"/>
    </source>
</evidence>
<evidence type="ECO:0007744" key="18">
    <source>
        <dbReference type="PDB" id="4ITG"/>
    </source>
</evidence>
<evidence type="ECO:0007744" key="19">
    <source>
        <dbReference type="PDB" id="4ITX"/>
    </source>
</evidence>
<evidence type="ECO:0007829" key="20">
    <source>
        <dbReference type="PDB" id="2FQ6"/>
    </source>
</evidence>
<evidence type="ECO:0007829" key="21">
    <source>
        <dbReference type="PDB" id="4ITX"/>
    </source>
</evidence>
<name>METC_ECOLI</name>
<comment type="function">
    <text evidence="1 3 5">Primarily catalyzes the cleavage of cystathionine to homocysteine, pyruvate and ammonia during methionine biosynthesis (PubMed:7049234). Also exhibits cysteine desulfhydrase activity, producing sulfide from cysteine (PubMed:12883870). In addition, under certain growth conditions, exhibits significant alanine racemase coactivity (PubMed:21193606).</text>
</comment>
<comment type="catalytic activity">
    <reaction evidence="5">
        <text>L,L-cystathionine + H2O = L-homocysteine + pyruvate + NH4(+)</text>
        <dbReference type="Rhea" id="RHEA:13965"/>
        <dbReference type="ChEBI" id="CHEBI:15361"/>
        <dbReference type="ChEBI" id="CHEBI:15377"/>
        <dbReference type="ChEBI" id="CHEBI:28938"/>
        <dbReference type="ChEBI" id="CHEBI:58161"/>
        <dbReference type="ChEBI" id="CHEBI:58199"/>
    </reaction>
</comment>
<comment type="catalytic activity">
    <reaction evidence="1">
        <text>L-cysteine + H2O = hydrogen sulfide + pyruvate + NH4(+) + H(+)</text>
        <dbReference type="Rhea" id="RHEA:24931"/>
        <dbReference type="ChEBI" id="CHEBI:15361"/>
        <dbReference type="ChEBI" id="CHEBI:15377"/>
        <dbReference type="ChEBI" id="CHEBI:15378"/>
        <dbReference type="ChEBI" id="CHEBI:28938"/>
        <dbReference type="ChEBI" id="CHEBI:29919"/>
        <dbReference type="ChEBI" id="CHEBI:35235"/>
        <dbReference type="EC" id="4.4.1.28"/>
    </reaction>
</comment>
<comment type="catalytic activity">
    <reaction evidence="5">
        <text>an S-substituted L-cysteine + H2O = a thiol + pyruvate + NH4(+)</text>
        <dbReference type="Rhea" id="RHEA:18121"/>
        <dbReference type="ChEBI" id="CHEBI:15361"/>
        <dbReference type="ChEBI" id="CHEBI:15377"/>
        <dbReference type="ChEBI" id="CHEBI:28938"/>
        <dbReference type="ChEBI" id="CHEBI:29256"/>
        <dbReference type="ChEBI" id="CHEBI:58717"/>
        <dbReference type="EC" id="4.4.1.13"/>
    </reaction>
</comment>
<comment type="cofactor">
    <cofactor evidence="4 5 6">
        <name>pyridoxal 5'-phosphate</name>
        <dbReference type="ChEBI" id="CHEBI:597326"/>
    </cofactor>
</comment>
<comment type="activity regulation">
    <text evidence="5 8">L-cysteine inhibits cystathionine beta-lyase activity competitively (PubMed:7049234). Inhibited by aminoethoxyvinylglycine (AVG) (PubMed:9376370).</text>
</comment>
<comment type="biophysicochemical properties">
    <kinetics>
        <KM evidence="5">0.04 mM for L-cystathionine</KM>
        <KM evidence="5">0.25 mM for L-cystine</KM>
        <Vmax evidence="5">249.0 umol/min/mg enzyme with L-cystathionine as substrate</Vmax>
        <Vmax evidence="5">263.0 umol/min/mg enzyme with L-cystine as substrate</Vmax>
    </kinetics>
    <phDependence>
        <text evidence="5">Optimum pH is 8.0-9.0.</text>
    </phDependence>
</comment>
<comment type="pathway">
    <text evidence="13">Amino-acid biosynthesis; L-methionine biosynthesis via de novo pathway; L-homocysteine from L-cystathionine: step 1/1.</text>
</comment>
<comment type="subunit">
    <text evidence="7">Homotetramer; dimer of dimers.</text>
</comment>
<comment type="subcellular location">
    <subcellularLocation>
        <location evidence="13">Cytoplasm</location>
    </subcellularLocation>
</comment>
<comment type="disruption phenotype">
    <text evidence="2">Disruption of the gene increases the amounts of L-cysteine and L-cystine produced after 72 hours of cultivation.</text>
</comment>
<comment type="similarity">
    <text evidence="13">Belongs to the trans-sulfuration enzymes family.</text>
</comment>
<comment type="sequence caution" evidence="13">
    <conflict type="erroneous initiation">
        <sequence resource="EMBL-CDS" id="AAA69175"/>
    </conflict>
</comment>
<sequence length="395" mass="43212">MADKKLDTQLVNAGRSKKYTLGAVNSVIQRASSLVFDSVEAKKHATRNRANGELFYGRRGTLTHFSLQQAMCELEGGAGCVLFPCGAAAVANSILAFIEQGDHVLMTNTAYEPSQDFCSKILSKLGVTTSWFDPLIGADIVKHLQPNTKIVFLESPGSITMEVHDVPAIVAAVRSVVPDAIIMIDNTWAAGVLFKALDFGIDVSIQAATKYLVGHSDAMIGTAVCNARCWEQLRENAYLMGQMVDADTAYITSRGLRTLGVRLRQHHESSLKVAEWLAEHPQVARVNHPALPGSKGHEFWKRDFTGSSGLFSFVLKKKLNNEELANYLDNFSLFSMAYSWGGYESLILANQPEHIAAIRPQGEIDFSGTLIRLHIGLEDVDDLIADLDAGFARIV</sequence>
<accession>P06721</accession>
<accession>Q2M9J1</accession>
<dbReference type="EC" id="4.4.1.13" evidence="5"/>
<dbReference type="EC" id="4.4.1.28" evidence="1"/>
<dbReference type="EMBL" id="M12858">
    <property type="protein sequence ID" value="AAA24158.1"/>
    <property type="molecule type" value="Genomic_DNA"/>
</dbReference>
<dbReference type="EMBL" id="U28377">
    <property type="protein sequence ID" value="AAA69175.1"/>
    <property type="status" value="ALT_INIT"/>
    <property type="molecule type" value="Genomic_DNA"/>
</dbReference>
<dbReference type="EMBL" id="U00096">
    <property type="protein sequence ID" value="AAC76044.1"/>
    <property type="molecule type" value="Genomic_DNA"/>
</dbReference>
<dbReference type="EMBL" id="AP009048">
    <property type="protein sequence ID" value="BAE77065.1"/>
    <property type="molecule type" value="Genomic_DNA"/>
</dbReference>
<dbReference type="PIR" id="A25153">
    <property type="entry name" value="WZECCB"/>
</dbReference>
<dbReference type="RefSeq" id="NP_417481.1">
    <property type="nucleotide sequence ID" value="NC_000913.3"/>
</dbReference>
<dbReference type="RefSeq" id="WP_001301079.1">
    <property type="nucleotide sequence ID" value="NZ_SSZK01000023.1"/>
</dbReference>
<dbReference type="PDB" id="1CL1">
    <property type="method" value="X-ray"/>
    <property type="resolution" value="1.83 A"/>
    <property type="chains" value="A/B=1-395"/>
</dbReference>
<dbReference type="PDB" id="1CL2">
    <property type="method" value="X-ray"/>
    <property type="resolution" value="2.20 A"/>
    <property type="chains" value="A/B=1-395"/>
</dbReference>
<dbReference type="PDB" id="2FQ6">
    <property type="method" value="X-ray"/>
    <property type="resolution" value="1.78 A"/>
    <property type="chains" value="A/B=1-395"/>
</dbReference>
<dbReference type="PDB" id="2GQN">
    <property type="method" value="X-ray"/>
    <property type="resolution" value="1.80 A"/>
    <property type="chains" value="A/B=1-395"/>
</dbReference>
<dbReference type="PDB" id="4ITG">
    <property type="method" value="X-ray"/>
    <property type="resolution" value="1.74 A"/>
    <property type="chains" value="A/B=1-395"/>
</dbReference>
<dbReference type="PDB" id="4ITX">
    <property type="method" value="X-ray"/>
    <property type="resolution" value="1.61 A"/>
    <property type="chains" value="A/B=1-395"/>
</dbReference>
<dbReference type="PDBsum" id="1CL1"/>
<dbReference type="PDBsum" id="1CL2"/>
<dbReference type="PDBsum" id="2FQ6"/>
<dbReference type="PDBsum" id="2GQN"/>
<dbReference type="PDBsum" id="4ITG"/>
<dbReference type="PDBsum" id="4ITX"/>
<dbReference type="SMR" id="P06721"/>
<dbReference type="BioGRID" id="4261419">
    <property type="interactions" value="48"/>
</dbReference>
<dbReference type="DIP" id="DIP-10193N"/>
<dbReference type="FunCoup" id="P06721">
    <property type="interactions" value="213"/>
</dbReference>
<dbReference type="IntAct" id="P06721">
    <property type="interactions" value="6"/>
</dbReference>
<dbReference type="STRING" id="511145.b3008"/>
<dbReference type="BindingDB" id="P06721"/>
<dbReference type="ChEMBL" id="CHEMBL1075079"/>
<dbReference type="jPOST" id="P06721"/>
<dbReference type="PaxDb" id="511145-b3008"/>
<dbReference type="EnsemblBacteria" id="AAC76044">
    <property type="protein sequence ID" value="AAC76044"/>
    <property type="gene ID" value="b3008"/>
</dbReference>
<dbReference type="GeneID" id="946240"/>
<dbReference type="KEGG" id="ecj:JW2975"/>
<dbReference type="KEGG" id="eco:b3008"/>
<dbReference type="KEGG" id="ecoc:C3026_16440"/>
<dbReference type="PATRIC" id="fig|511145.12.peg.3102"/>
<dbReference type="EchoBASE" id="EB0578"/>
<dbReference type="eggNOG" id="COG0626">
    <property type="taxonomic scope" value="Bacteria"/>
</dbReference>
<dbReference type="HOGENOM" id="CLU_018986_5_1_6"/>
<dbReference type="InParanoid" id="P06721"/>
<dbReference type="OMA" id="GPYTYGR"/>
<dbReference type="OrthoDB" id="9805807at2"/>
<dbReference type="PhylomeDB" id="P06721"/>
<dbReference type="BioCyc" id="EcoCyc:CYSTATHIONINE-BETA-LYASE-MONOMER"/>
<dbReference type="BioCyc" id="MetaCyc:CYSTATHIONINE-BETA-LYASE-MONOMER"/>
<dbReference type="BRENDA" id="4.4.1.13">
    <property type="organism ID" value="2026"/>
</dbReference>
<dbReference type="BRENDA" id="5.1.1.1">
    <property type="organism ID" value="2026"/>
</dbReference>
<dbReference type="UniPathway" id="UPA00051">
    <property type="reaction ID" value="UER00078"/>
</dbReference>
<dbReference type="EvolutionaryTrace" id="P06721"/>
<dbReference type="PRO" id="PR:P06721"/>
<dbReference type="Proteomes" id="UP000000625">
    <property type="component" value="Chromosome"/>
</dbReference>
<dbReference type="GO" id="GO:0005737">
    <property type="term" value="C:cytoplasm"/>
    <property type="evidence" value="ECO:0007669"/>
    <property type="project" value="UniProtKB-SubCell"/>
</dbReference>
<dbReference type="GO" id="GO:0032991">
    <property type="term" value="C:protein-containing complex"/>
    <property type="evidence" value="ECO:0000314"/>
    <property type="project" value="EcoCyc"/>
</dbReference>
<dbReference type="GO" id="GO:0008784">
    <property type="term" value="F:alanine racemase activity"/>
    <property type="evidence" value="ECO:0000314"/>
    <property type="project" value="EcoCyc"/>
</dbReference>
<dbReference type="GO" id="GO:0047804">
    <property type="term" value="F:cysteine-S-conjugate beta-lyase activity"/>
    <property type="evidence" value="ECO:0000314"/>
    <property type="project" value="EcoCyc"/>
</dbReference>
<dbReference type="GO" id="GO:0042802">
    <property type="term" value="F:identical protein binding"/>
    <property type="evidence" value="ECO:0000314"/>
    <property type="project" value="EcoCyc"/>
</dbReference>
<dbReference type="GO" id="GO:0080146">
    <property type="term" value="F:L-cysteine desulfhydrase activity"/>
    <property type="evidence" value="ECO:0000314"/>
    <property type="project" value="EcoCyc"/>
</dbReference>
<dbReference type="GO" id="GO:0030170">
    <property type="term" value="F:pyridoxal phosphate binding"/>
    <property type="evidence" value="ECO:0000314"/>
    <property type="project" value="EcoCyc"/>
</dbReference>
<dbReference type="GO" id="GO:0019450">
    <property type="term" value="P:L-cysteine catabolic process to pyruvate"/>
    <property type="evidence" value="ECO:0000315"/>
    <property type="project" value="EcoCyc"/>
</dbReference>
<dbReference type="GO" id="GO:0009086">
    <property type="term" value="P:methionine biosynthetic process"/>
    <property type="evidence" value="ECO:0000315"/>
    <property type="project" value="EcoCyc"/>
</dbReference>
<dbReference type="GO" id="GO:0051289">
    <property type="term" value="P:protein homotetramerization"/>
    <property type="evidence" value="ECO:0000314"/>
    <property type="project" value="EcoCyc"/>
</dbReference>
<dbReference type="GO" id="GO:0019346">
    <property type="term" value="P:transsulfuration"/>
    <property type="evidence" value="ECO:0007669"/>
    <property type="project" value="InterPro"/>
</dbReference>
<dbReference type="CDD" id="cd00614">
    <property type="entry name" value="CGS_like"/>
    <property type="match status" value="1"/>
</dbReference>
<dbReference type="FunFam" id="3.40.640.10:FF:000062">
    <property type="entry name" value="Cystathionine beta-lyase"/>
    <property type="match status" value="1"/>
</dbReference>
<dbReference type="FunFam" id="3.90.1150.10:FF:000058">
    <property type="entry name" value="Cystathionine beta-lyase"/>
    <property type="match status" value="1"/>
</dbReference>
<dbReference type="Gene3D" id="3.90.1150.10">
    <property type="entry name" value="Aspartate Aminotransferase, domain 1"/>
    <property type="match status" value="1"/>
</dbReference>
<dbReference type="Gene3D" id="3.40.640.10">
    <property type="entry name" value="Type I PLP-dependent aspartate aminotransferase-like (Major domain)"/>
    <property type="match status" value="1"/>
</dbReference>
<dbReference type="InterPro" id="IPR000277">
    <property type="entry name" value="Cys/Met-Metab_PyrdxlP-dep_enz"/>
</dbReference>
<dbReference type="InterPro" id="IPR006233">
    <property type="entry name" value="Cys_b_lyase_bac"/>
</dbReference>
<dbReference type="InterPro" id="IPR054542">
    <property type="entry name" value="Cys_met_metab_PP"/>
</dbReference>
<dbReference type="InterPro" id="IPR015424">
    <property type="entry name" value="PyrdxlP-dep_Trfase"/>
</dbReference>
<dbReference type="InterPro" id="IPR015421">
    <property type="entry name" value="PyrdxlP-dep_Trfase_major"/>
</dbReference>
<dbReference type="InterPro" id="IPR015422">
    <property type="entry name" value="PyrdxlP-dep_Trfase_small"/>
</dbReference>
<dbReference type="NCBIfam" id="TIGR01324">
    <property type="entry name" value="cysta_beta_ly_B"/>
    <property type="match status" value="1"/>
</dbReference>
<dbReference type="NCBIfam" id="NF005990">
    <property type="entry name" value="PRK08114.1"/>
    <property type="match status" value="1"/>
</dbReference>
<dbReference type="PANTHER" id="PTHR43500">
    <property type="entry name" value="CYSTATHIONINE BETA-LYASE-RELATED"/>
    <property type="match status" value="1"/>
</dbReference>
<dbReference type="PANTHER" id="PTHR43500:SF1">
    <property type="entry name" value="CYSTATHIONINE BETA-LYASE-RELATED"/>
    <property type="match status" value="1"/>
</dbReference>
<dbReference type="Pfam" id="PF01053">
    <property type="entry name" value="Cys_Met_Meta_PP"/>
    <property type="match status" value="1"/>
</dbReference>
<dbReference type="PIRSF" id="PIRSF001434">
    <property type="entry name" value="CGS"/>
    <property type="match status" value="1"/>
</dbReference>
<dbReference type="SUPFAM" id="SSF53383">
    <property type="entry name" value="PLP-dependent transferases"/>
    <property type="match status" value="1"/>
</dbReference>
<dbReference type="PROSITE" id="PS00868">
    <property type="entry name" value="CYS_MET_METAB_PP"/>
    <property type="match status" value="1"/>
</dbReference>
<reference key="1">
    <citation type="journal article" date="1986" name="Proc. Natl. Acad. Sci. U.S.A.">
        <title>Evolution in biosynthetic pathways: two enzymes catalyzing consecutive steps in methionine biosynthesis originate from a common ancestor and possess a similar regulatory region.</title>
        <authorList>
            <person name="Belfaiza J."/>
            <person name="Parsot C."/>
            <person name="Martel A."/>
            <person name="de la Tour C.B."/>
            <person name="Margarita D."/>
            <person name="Cohen G.N."/>
            <person name="Saint-Girons I."/>
        </authorList>
    </citation>
    <scope>NUCLEOTIDE SEQUENCE [GENOMIC DNA]</scope>
    <scope>PROTEIN SEQUENCE OF 2-11</scope>
    <source>
        <strain>K12</strain>
    </source>
</reference>
<reference key="2">
    <citation type="journal article" date="1997" name="Science">
        <title>The complete genome sequence of Escherichia coli K-12.</title>
        <authorList>
            <person name="Blattner F.R."/>
            <person name="Plunkett G. III"/>
            <person name="Bloch C.A."/>
            <person name="Perna N.T."/>
            <person name="Burland V."/>
            <person name="Riley M."/>
            <person name="Collado-Vides J."/>
            <person name="Glasner J.D."/>
            <person name="Rode C.K."/>
            <person name="Mayhew G.F."/>
            <person name="Gregor J."/>
            <person name="Davis N.W."/>
            <person name="Kirkpatrick H.A."/>
            <person name="Goeden M.A."/>
            <person name="Rose D.J."/>
            <person name="Mau B."/>
            <person name="Shao Y."/>
        </authorList>
    </citation>
    <scope>NUCLEOTIDE SEQUENCE [LARGE SCALE GENOMIC DNA]</scope>
    <source>
        <strain>K12 / MG1655 / ATCC 47076</strain>
    </source>
</reference>
<reference key="3">
    <citation type="journal article" date="2006" name="Mol. Syst. Biol.">
        <title>Highly accurate genome sequences of Escherichia coli K-12 strains MG1655 and W3110.</title>
        <authorList>
            <person name="Hayashi K."/>
            <person name="Morooka N."/>
            <person name="Yamamoto Y."/>
            <person name="Fujita K."/>
            <person name="Isono K."/>
            <person name="Choi S."/>
            <person name="Ohtsubo E."/>
            <person name="Baba T."/>
            <person name="Wanner B.L."/>
            <person name="Mori H."/>
            <person name="Horiuchi T."/>
        </authorList>
    </citation>
    <scope>NUCLEOTIDE SEQUENCE [LARGE SCALE GENOMIC DNA]</scope>
    <source>
        <strain>K12 / W3110 / ATCC 27325 / DSM 5911</strain>
    </source>
</reference>
<reference key="4">
    <citation type="journal article" date="1987" name="Biochem. Biophys. Res. Commun.">
        <title>Pyridoxal 5'phosphate binding site of Escherichia coli beta cystathionase and cystathionine gamma synthase comparison of their sequences.</title>
        <authorList>
            <person name="Martel A."/>
            <person name="Bouthier de la Tour C."/>
            <person name="Le Goffic F."/>
        </authorList>
    </citation>
    <scope>PROTEIN SEQUENCE OF 194-221</scope>
    <scope>COFACTOR</scope>
    <scope>PYRIDOXAL PHOSPHATE AT LYS-210</scope>
</reference>
<reference key="5">
    <citation type="journal article" date="1982" name="Biochemistry">
        <title>Cloning, purification, and characterization of beta-cystathionase from Escherichia coli.</title>
        <authorList>
            <person name="Dwivedi C.M."/>
            <person name="Ragin R.C."/>
            <person name="Uren J.R."/>
        </authorList>
    </citation>
    <scope>FUNCTION</scope>
    <scope>CATALYTIC ACTIVITY</scope>
    <scope>COFACTOR</scope>
    <scope>ACTIVITY REGULATION</scope>
    <scope>BIOPHYSICOCHEMICAL PROPERTIES</scope>
</reference>
<reference key="6">
    <citation type="journal article" date="1996" name="FEBS Lett.">
        <title>Cloning, purification, and crystallization of Escherichia coli cystathionine beta-lyase.</title>
        <authorList>
            <person name="Laber B."/>
            <person name="Clausen T."/>
            <person name="Huber R."/>
            <person name="Messerschmidt A."/>
            <person name="Egner U."/>
            <person name="Mueller-Fahrnow A."/>
            <person name="Pohlenz H.D."/>
        </authorList>
    </citation>
    <scope>COFACTOR</scope>
    <scope>CRYSTALLIZATION</scope>
</reference>
<reference key="7">
    <citation type="journal article" date="1997" name="Electrophoresis">
        <title>Escherichia coli proteome analysis using the gene-protein database.</title>
        <authorList>
            <person name="VanBogelen R.A."/>
            <person name="Abshire K.Z."/>
            <person name="Moldover B."/>
            <person name="Olson E.R."/>
            <person name="Neidhardt F.C."/>
        </authorList>
    </citation>
    <scope>IDENTIFICATION BY 2D-GEL</scope>
</reference>
<reference key="8">
    <citation type="journal article" date="2003" name="Appl. Microbiol. Biotechnol.">
        <title>Effect of cysteine desulfhydrase gene disruption on L-cysteine overproduction in Escherichia coli.</title>
        <authorList>
            <person name="Awano N."/>
            <person name="Wada M."/>
            <person name="Kohdoh A."/>
            <person name="Oikawa T."/>
            <person name="Takagi H."/>
            <person name="Nakamori S."/>
        </authorList>
    </citation>
    <scope>FUNCTION AS A CYSTEINE DESULFHYDRASE</scope>
    <scope>CATALYTIC ACTIVITY</scope>
</reference>
<reference key="9">
    <citation type="journal article" date="2005" name="Appl. Environ. Microbiol.">
        <title>Identification and functional analysis of Escherichia coli cysteine desulfhydrases.</title>
        <authorList>
            <person name="Awano N."/>
            <person name="Wada M."/>
            <person name="Mori H."/>
            <person name="Nakamori S."/>
            <person name="Takagi H."/>
        </authorList>
    </citation>
    <scope>DISRUPTION PHENOTYPE</scope>
</reference>
<reference key="10">
    <citation type="journal article" date="2011" name="J. Bacteriol.">
        <title>Upregulation of MetC is essential for D-alanine-independent growth of an alr/dadX-deficient Escherichia coli strain.</title>
        <authorList>
            <person name="Kang L."/>
            <person name="Shaw A.C."/>
            <person name="Xu D."/>
            <person name="Xia W."/>
            <person name="Zhang J."/>
            <person name="Deng J."/>
            <person name="Woeldike H.F."/>
            <person name="Liu Y."/>
            <person name="Su J."/>
        </authorList>
    </citation>
    <scope>FUNCTION AS AN ALANINE RACEMASE</scope>
</reference>
<reference evidence="14" key="11">
    <citation type="journal article" date="1996" name="J. Mol. Biol.">
        <title>Crystal structure of the pyridoxal-5'-phosphate dependent cystathionine beta-lyase from Escherichia coli at 1.83 A.</title>
        <authorList>
            <person name="Clausen T."/>
            <person name="Huber R."/>
            <person name="Laber B."/>
            <person name="Pohlenz H.-D."/>
            <person name="Messerschmidt A."/>
        </authorList>
    </citation>
    <scope>X-RAY CRYSTALLOGRAPHY (1.83 ANGSTROMS)</scope>
    <scope>SUBUNIT</scope>
    <scope>PYRIDOXAL PHOSPHATE AT LYS-210</scope>
</reference>
<reference evidence="15" key="12">
    <citation type="journal article" date="1997" name="Biochemistry">
        <title>Slow-binding inhibition of Escherichia coli cystathionine beta-lyase by L-aminoethoxyvinylglycine: a kinetic and X-ray study.</title>
        <authorList>
            <person name="Clausen T."/>
            <person name="Huber R."/>
            <person name="Messerschmidt A."/>
            <person name="Pohlenz H.D."/>
            <person name="Laber B."/>
        </authorList>
    </citation>
    <scope>X-RAY CRYSTALLOGRAPHY (2.20 ANGSTROMS) IN COMPLEX WITH AMINOETHOXYVINYLGLYCINE</scope>
    <scope>ACTIVITY REGULATION</scope>
</reference>
<reference evidence="16 17" key="13">
    <citation type="journal article" date="2007" name="J. Med. Chem.">
        <title>Inhibitors of bacterial cystathionine beta-lyase: leads for new antimicrobial agents and probes of enzyme structure and function.</title>
        <authorList>
            <person name="Ejim L.J."/>
            <person name="Blanchard J.E."/>
            <person name="Koteva K.P."/>
            <person name="Sumerfield R."/>
            <person name="Elowe N.H."/>
            <person name="Chechetto J.D."/>
            <person name="Brown E.D."/>
            <person name="Junop M.S."/>
            <person name="Wright G.D."/>
        </authorList>
    </citation>
    <scope>X-RAY CRYSTALLOGRAPHY (1.78 ANGSTROMS) IN COMPLEXES WITH INHIBITORS</scope>
</reference>
<reference evidence="18" key="14">
    <citation type="submission" date="2013-01" db="PDB data bank">
        <title>E. coli cystathionine beta-lyase (MetC) P113S mutant.</title>
        <authorList>
            <person name="Soo V.W.C."/>
            <person name="Yosaatmadja Y."/>
            <person name="Squire C.J."/>
            <person name="Patrick W.M."/>
        </authorList>
    </citation>
    <scope>X-RAY CRYSTALLOGRAPHY (1.74 ANGSTROMS) OF MUTANT SER-113</scope>
</reference>
<reference evidence="19" key="15">
    <citation type="submission" date="2013-01" db="PDB data bank">
        <title>Structure and activity of P113S mutant of E. coli Cystathionine beta-lyase (MetC).</title>
        <authorList>
            <person name="Soo V.W.C."/>
            <person name="Yosaatmadja Y."/>
            <person name="Squire C.J."/>
            <person name="Patrick W.M."/>
        </authorList>
    </citation>
    <scope>X-RAY CRYSTALLOGRAPHY (1.61 ANGSTROMS) OF MUTANT SER-113</scope>
</reference>